<comment type="function">
    <text evidence="7">Catalyzes the formation of S-adenosylmethionine from methionine and ATP. The reaction comprises two steps that are both catalyzed by the same enzyme: formation of S-adenosylmethionine (AdoMet) and triphosphate, and subsequent hydrolysis of the triphosphate.</text>
</comment>
<comment type="catalytic activity">
    <reaction evidence="7">
        <text>L-methionine + ATP + H2O = S-adenosyl-L-methionine + phosphate + diphosphate</text>
        <dbReference type="Rhea" id="RHEA:21080"/>
        <dbReference type="ChEBI" id="CHEBI:15377"/>
        <dbReference type="ChEBI" id="CHEBI:30616"/>
        <dbReference type="ChEBI" id="CHEBI:33019"/>
        <dbReference type="ChEBI" id="CHEBI:43474"/>
        <dbReference type="ChEBI" id="CHEBI:57844"/>
        <dbReference type="ChEBI" id="CHEBI:59789"/>
        <dbReference type="EC" id="2.5.1.6"/>
    </reaction>
</comment>
<comment type="cofactor">
    <cofactor evidence="2">
        <name>Mg(2+)</name>
        <dbReference type="ChEBI" id="CHEBI:18420"/>
    </cofactor>
    <text evidence="2">Binds 2 magnesium ions per subunit. The magnesium ions interact primarily with the substrate.</text>
</comment>
<comment type="cofactor">
    <cofactor evidence="2">
        <name>K(+)</name>
        <dbReference type="ChEBI" id="CHEBI:29103"/>
    </cofactor>
    <text evidence="2">Binds 1 potassium ion per subunit. The potassium ion interacts primarily with the substrate.</text>
</comment>
<comment type="pathway">
    <text evidence="5">Amino-acid biosynthesis; S-adenosyl-L-methionine biosynthesis; S-adenosyl-L-methionine from L-methionine: step 1/1.</text>
</comment>
<comment type="subunit">
    <text>Heterotetramer.</text>
</comment>
<comment type="interaction">
    <interactant intactId="EBI-10789">
        <id>P10659</id>
    </interactant>
    <interactant intactId="EBI-10795">
        <id>P19358</id>
        <label>SAM2</label>
    </interactant>
    <organismsDiffer>false</organismsDiffer>
    <experiments>5</experiments>
</comment>
<comment type="miscellaneous">
    <text>In yeast, there are two genes coding for AdoMet synthase.</text>
</comment>
<comment type="miscellaneous">
    <text evidence="4">Present with 103000 molecules/cell in log phase SD medium.</text>
</comment>
<comment type="similarity">
    <text evidence="6">Belongs to the AdoMet synthase family.</text>
</comment>
<reference key="1">
    <citation type="journal article" date="1987" name="J. Biol. Chem.">
        <title>SAM1, the structural gene for one of the S-adenosylmethionine synthetases in Saccharomyces cerevisiae. Sequence and expression.</title>
        <authorList>
            <person name="Thomas D."/>
            <person name="Surdin-Kerjan Y."/>
        </authorList>
    </citation>
    <scope>NUCLEOTIDE SEQUENCE [GENOMIC DNA]</scope>
    <scope>FUNCTION</scope>
    <scope>CATALYTIC ACTIVITY</scope>
    <scope>PATHWAY</scope>
</reference>
<reference key="2">
    <citation type="journal article" date="1997" name="Nature">
        <title>The nucleotide sequence of Saccharomyces cerevisiae chromosome XII.</title>
        <authorList>
            <person name="Johnston M."/>
            <person name="Hillier L.W."/>
            <person name="Riles L."/>
            <person name="Albermann K."/>
            <person name="Andre B."/>
            <person name="Ansorge W."/>
            <person name="Benes V."/>
            <person name="Brueckner M."/>
            <person name="Delius H."/>
            <person name="Dubois E."/>
            <person name="Duesterhoeft A."/>
            <person name="Entian K.-D."/>
            <person name="Floeth M."/>
            <person name="Goffeau A."/>
            <person name="Hebling U."/>
            <person name="Heumann K."/>
            <person name="Heuss-Neitzel D."/>
            <person name="Hilbert H."/>
            <person name="Hilger F."/>
            <person name="Kleine K."/>
            <person name="Koetter P."/>
            <person name="Louis E.J."/>
            <person name="Messenguy F."/>
            <person name="Mewes H.-W."/>
            <person name="Miosga T."/>
            <person name="Moestl D."/>
            <person name="Mueller-Auer S."/>
            <person name="Nentwich U."/>
            <person name="Obermaier B."/>
            <person name="Piravandi E."/>
            <person name="Pohl T.M."/>
            <person name="Portetelle D."/>
            <person name="Purnelle B."/>
            <person name="Rechmann S."/>
            <person name="Rieger M."/>
            <person name="Rinke M."/>
            <person name="Rose M."/>
            <person name="Scharfe M."/>
            <person name="Scherens B."/>
            <person name="Scholler P."/>
            <person name="Schwager C."/>
            <person name="Schwarz S."/>
            <person name="Underwood A.P."/>
            <person name="Urrestarazu L.A."/>
            <person name="Vandenbol M."/>
            <person name="Verhasselt P."/>
            <person name="Vierendeels F."/>
            <person name="Voet M."/>
            <person name="Volckaert G."/>
            <person name="Voss H."/>
            <person name="Wambutt R."/>
            <person name="Wedler E."/>
            <person name="Wedler H."/>
            <person name="Zimmermann F.K."/>
            <person name="Zollner A."/>
            <person name="Hani J."/>
            <person name="Hoheisel J.D."/>
        </authorList>
    </citation>
    <scope>NUCLEOTIDE SEQUENCE [LARGE SCALE GENOMIC DNA]</scope>
    <source>
        <strain>ATCC 204508 / S288c</strain>
    </source>
</reference>
<reference key="3">
    <citation type="journal article" date="2014" name="G3 (Bethesda)">
        <title>The reference genome sequence of Saccharomyces cerevisiae: Then and now.</title>
        <authorList>
            <person name="Engel S.R."/>
            <person name="Dietrich F.S."/>
            <person name="Fisk D.G."/>
            <person name="Binkley G."/>
            <person name="Balakrishnan R."/>
            <person name="Costanzo M.C."/>
            <person name="Dwight S.S."/>
            <person name="Hitz B.C."/>
            <person name="Karra K."/>
            <person name="Nash R.S."/>
            <person name="Weng S."/>
            <person name="Wong E.D."/>
            <person name="Lloyd P."/>
            <person name="Skrzypek M.S."/>
            <person name="Miyasato S.R."/>
            <person name="Simison M."/>
            <person name="Cherry J.M."/>
        </authorList>
    </citation>
    <scope>GENOME REANNOTATION</scope>
    <source>
        <strain>ATCC 204508 / S288c</strain>
    </source>
</reference>
<reference key="4">
    <citation type="journal article" date="1996" name="FEMS Microbiol. Lett.">
        <title>Protein expression during exponential growth in 0.7 M NaCl medium of Saccharomyces cerevisiae.</title>
        <authorList>
            <person name="Norbeck J."/>
            <person name="Blomberg A."/>
        </authorList>
    </citation>
    <scope>PROTEIN SEQUENCE OF 157-162; 187-196 AND 253-258</scope>
    <source>
        <strain>ATCC 38531 / Y41</strain>
    </source>
</reference>
<reference key="5">
    <citation type="journal article" date="2003" name="Nature">
        <title>Global analysis of protein expression in yeast.</title>
        <authorList>
            <person name="Ghaemmaghami S."/>
            <person name="Huh W.-K."/>
            <person name="Bower K."/>
            <person name="Howson R.W."/>
            <person name="Belle A."/>
            <person name="Dephoure N."/>
            <person name="O'Shea E.K."/>
            <person name="Weissman J.S."/>
        </authorList>
    </citation>
    <scope>LEVEL OF PROTEIN EXPRESSION [LARGE SCALE ANALYSIS]</scope>
</reference>
<protein>
    <recommendedName>
        <fullName>S-adenosylmethionine synthase 1</fullName>
        <shortName>AdoMet synthase 1</shortName>
        <ecNumber evidence="7">2.5.1.6</ecNumber>
    </recommendedName>
    <alternativeName>
        <fullName>Methionine adenosyltransferase 1</fullName>
        <shortName>MAT 1</shortName>
    </alternativeName>
</protein>
<proteinExistence type="evidence at protein level"/>
<feature type="chain" id="PRO_0000174451" description="S-adenosylmethionine synthase 1">
    <location>
        <begin position="1"/>
        <end position="382"/>
    </location>
</feature>
<feature type="binding site" evidence="2">
    <location>
        <position position="10"/>
    </location>
    <ligand>
        <name>Mg(2+)</name>
        <dbReference type="ChEBI" id="CHEBI:18420"/>
    </ligand>
</feature>
<feature type="binding site" description="in other chain" evidence="3">
    <location>
        <position position="16"/>
    </location>
    <ligand>
        <name>ATP</name>
        <dbReference type="ChEBI" id="CHEBI:30616"/>
        <note>ligand shared between two neighboring subunits</note>
    </ligand>
</feature>
<feature type="binding site" evidence="1">
    <location>
        <position position="44"/>
    </location>
    <ligand>
        <name>K(+)</name>
        <dbReference type="ChEBI" id="CHEBI:29103"/>
    </ligand>
</feature>
<feature type="binding site" description="in other chain" evidence="1">
    <location>
        <position position="57"/>
    </location>
    <ligand>
        <name>L-methionine</name>
        <dbReference type="ChEBI" id="CHEBI:57844"/>
        <note>ligand shared between two neighboring subunits</note>
    </ligand>
</feature>
<feature type="binding site" description="in other chain" evidence="1">
    <location>
        <position position="100"/>
    </location>
    <ligand>
        <name>L-methionine</name>
        <dbReference type="ChEBI" id="CHEBI:57844"/>
        <note>ligand shared between two neighboring subunits</note>
    </ligand>
</feature>
<feature type="binding site" description="in other chain" evidence="3">
    <location>
        <begin position="166"/>
        <end position="168"/>
    </location>
    <ligand>
        <name>ATP</name>
        <dbReference type="ChEBI" id="CHEBI:30616"/>
        <note>ligand shared between two neighboring subunits</note>
    </ligand>
</feature>
<feature type="binding site" description="in other chain" evidence="3">
    <location>
        <begin position="234"/>
        <end position="237"/>
    </location>
    <ligand>
        <name>ATP</name>
        <dbReference type="ChEBI" id="CHEBI:30616"/>
        <note>ligand shared between two neighboring subunits</note>
    </ligand>
</feature>
<feature type="binding site" description="in other chain" evidence="3">
    <location>
        <position position="245"/>
    </location>
    <ligand>
        <name>ATP</name>
        <dbReference type="ChEBI" id="CHEBI:30616"/>
        <note>ligand shared between two neighboring subunits</note>
    </ligand>
</feature>
<feature type="binding site" evidence="1">
    <location>
        <position position="245"/>
    </location>
    <ligand>
        <name>L-methionine</name>
        <dbReference type="ChEBI" id="CHEBI:57844"/>
        <note>ligand shared between two neighboring subunits</note>
    </ligand>
</feature>
<feature type="binding site" description="in other chain" evidence="1">
    <location>
        <begin position="251"/>
        <end position="252"/>
    </location>
    <ligand>
        <name>ATP</name>
        <dbReference type="ChEBI" id="CHEBI:30616"/>
        <note>ligand shared between two neighboring subunits</note>
    </ligand>
</feature>
<feature type="binding site" evidence="1">
    <location>
        <position position="268"/>
    </location>
    <ligand>
        <name>ATP</name>
        <dbReference type="ChEBI" id="CHEBI:30616"/>
        <note>ligand shared between two neighboring subunits</note>
    </ligand>
</feature>
<feature type="binding site" evidence="1">
    <location>
        <position position="272"/>
    </location>
    <ligand>
        <name>ATP</name>
        <dbReference type="ChEBI" id="CHEBI:30616"/>
        <note>ligand shared between two neighboring subunits</note>
    </ligand>
</feature>
<feature type="binding site" evidence="2">
    <location>
        <position position="276"/>
    </location>
    <ligand>
        <name>ATP</name>
        <dbReference type="ChEBI" id="CHEBI:30616"/>
        <note>ligand shared between two neighboring subunits</note>
    </ligand>
</feature>
<feature type="binding site" description="in other chain" evidence="1">
    <location>
        <position position="276"/>
    </location>
    <ligand>
        <name>L-methionine</name>
        <dbReference type="ChEBI" id="CHEBI:57844"/>
        <note>ligand shared between two neighboring subunits</note>
    </ligand>
</feature>
<feature type="sequence conflict" description="In Ref. 1; AAA66932." evidence="6" ref="1">
    <original>A</original>
    <variation>T</variation>
    <location>
        <position position="246"/>
    </location>
</feature>
<feature type="sequence conflict" description="In Ref. 1; AAA66932." evidence="6" ref="1">
    <original>I</original>
    <variation>F</variation>
    <location>
        <position position="357"/>
    </location>
</feature>
<evidence type="ECO:0000250" key="1">
    <source>
        <dbReference type="UniProtKB" id="P0A817"/>
    </source>
</evidence>
<evidence type="ECO:0000250" key="2">
    <source>
        <dbReference type="UniProtKB" id="P13444"/>
    </source>
</evidence>
<evidence type="ECO:0000250" key="3">
    <source>
        <dbReference type="UniProtKB" id="Q00266"/>
    </source>
</evidence>
<evidence type="ECO:0000269" key="4">
    <source>
    </source>
</evidence>
<evidence type="ECO:0000269" key="5">
    <source>
    </source>
</evidence>
<evidence type="ECO:0000305" key="6"/>
<evidence type="ECO:0000305" key="7">
    <source>
    </source>
</evidence>
<accession>P10659</accession>
<accession>D6VYI4</accession>
<sequence length="382" mass="41818">MAGTFLFTSESVGEGHPDKICDQVSDAILDACLAEDPHSKVACETAAKTGMIMVFGEITTKAQLDYQKIVRDTIKKIGYDDSAKGFDYKTCNVLVAIEQQSPDIAQGVHEEKDLEDIGAGDQGIMFGYATDETPEGLPLTILLAHKLNMAMADARRDGSLAWLRPDTKTQVTVEYKDDHGRWVPQRIDTVVVSAQHADEITTEDLRAQLKSEIIEKVIPRDMLDENTKYFIQPSGRFVIGGPQGDAGLTGRKIIVDAYGGASSVGGGAFSGKDYSKVDRSAAYAARWVAKSLVAAGLCKRVQVQFSYAIGIAEPLSLHVDTYGTATKSDEEIIDIISKNFDLRPGVLVKELDLARPIYLPTASYGHFTNQEYPWEKPKTLKF</sequence>
<organism>
    <name type="scientific">Saccharomyces cerevisiae (strain ATCC 204508 / S288c)</name>
    <name type="common">Baker's yeast</name>
    <dbReference type="NCBI Taxonomy" id="559292"/>
    <lineage>
        <taxon>Eukaryota</taxon>
        <taxon>Fungi</taxon>
        <taxon>Dikarya</taxon>
        <taxon>Ascomycota</taxon>
        <taxon>Saccharomycotina</taxon>
        <taxon>Saccharomycetes</taxon>
        <taxon>Saccharomycetales</taxon>
        <taxon>Saccharomycetaceae</taxon>
        <taxon>Saccharomyces</taxon>
    </lineage>
</organism>
<keyword id="KW-0067">ATP-binding</keyword>
<keyword id="KW-0903">Direct protein sequencing</keyword>
<keyword id="KW-0460">Magnesium</keyword>
<keyword id="KW-0479">Metal-binding</keyword>
<keyword id="KW-0547">Nucleotide-binding</keyword>
<keyword id="KW-0554">One-carbon metabolism</keyword>
<keyword id="KW-0630">Potassium</keyword>
<keyword id="KW-1185">Reference proteome</keyword>
<keyword id="KW-0808">Transferase</keyword>
<gene>
    <name type="primary">SAM1</name>
    <name type="synonym">ETH10</name>
    <name type="ordered locus">YLR180W</name>
    <name type="ORF">L9470.9</name>
</gene>
<name>METK1_YEAST</name>
<dbReference type="EC" id="2.5.1.6" evidence="7"/>
<dbReference type="EMBL" id="J03477">
    <property type="protein sequence ID" value="AAA66932.1"/>
    <property type="molecule type" value="Genomic_DNA"/>
</dbReference>
<dbReference type="EMBL" id="U17246">
    <property type="protein sequence ID" value="AAB67461.1"/>
    <property type="molecule type" value="Genomic_DNA"/>
</dbReference>
<dbReference type="EMBL" id="BK006945">
    <property type="protein sequence ID" value="DAA09500.1"/>
    <property type="molecule type" value="Genomic_DNA"/>
</dbReference>
<dbReference type="PIR" id="S51425">
    <property type="entry name" value="S51425"/>
</dbReference>
<dbReference type="RefSeq" id="NP_013281.1">
    <property type="nucleotide sequence ID" value="NM_001182067.1"/>
</dbReference>
<dbReference type="SMR" id="P10659"/>
<dbReference type="BioGRID" id="31451">
    <property type="interactions" value="317"/>
</dbReference>
<dbReference type="ComplexPortal" id="CPX-9181">
    <property type="entry name" value="SESAME metabolic enzyme complex"/>
</dbReference>
<dbReference type="DIP" id="DIP-6667N"/>
<dbReference type="FunCoup" id="P10659">
    <property type="interactions" value="1527"/>
</dbReference>
<dbReference type="IntAct" id="P10659">
    <property type="interactions" value="192"/>
</dbReference>
<dbReference type="MINT" id="P10659"/>
<dbReference type="STRING" id="4932.YLR180W"/>
<dbReference type="iPTMnet" id="P10659"/>
<dbReference type="PaxDb" id="4932-YLR180W"/>
<dbReference type="PeptideAtlas" id="P10659"/>
<dbReference type="EnsemblFungi" id="YLR180W_mRNA">
    <property type="protein sequence ID" value="YLR180W"/>
    <property type="gene ID" value="YLR180W"/>
</dbReference>
<dbReference type="GeneID" id="850877"/>
<dbReference type="KEGG" id="sce:YLR180W"/>
<dbReference type="AGR" id="SGD:S000004170"/>
<dbReference type="SGD" id="S000004170">
    <property type="gene designation" value="SAM1"/>
</dbReference>
<dbReference type="VEuPathDB" id="FungiDB:YLR180W"/>
<dbReference type="eggNOG" id="KOG1506">
    <property type="taxonomic scope" value="Eukaryota"/>
</dbReference>
<dbReference type="GeneTree" id="ENSGT00950000183185"/>
<dbReference type="HOGENOM" id="CLU_041802_0_1_1"/>
<dbReference type="InParanoid" id="P10659"/>
<dbReference type="OMA" id="DGLCDHT"/>
<dbReference type="OrthoDB" id="5852090at2759"/>
<dbReference type="BioCyc" id="MetaCyc:YLR180W-MONOMER"/>
<dbReference type="BioCyc" id="YEAST:YLR180W-MONOMER"/>
<dbReference type="UniPathway" id="UPA00315">
    <property type="reaction ID" value="UER00080"/>
</dbReference>
<dbReference type="BioGRID-ORCS" id="850877">
    <property type="hits" value="0 hits in 10 CRISPR screens"/>
</dbReference>
<dbReference type="CD-CODE" id="E03F929F">
    <property type="entry name" value="Stress granule"/>
</dbReference>
<dbReference type="PRO" id="PR:P10659"/>
<dbReference type="Proteomes" id="UP000002311">
    <property type="component" value="Chromosome XII"/>
</dbReference>
<dbReference type="RNAct" id="P10659">
    <property type="molecule type" value="protein"/>
</dbReference>
<dbReference type="GO" id="GO:0005737">
    <property type="term" value="C:cytoplasm"/>
    <property type="evidence" value="ECO:0007005"/>
    <property type="project" value="SGD"/>
</dbReference>
<dbReference type="GO" id="GO:0010494">
    <property type="term" value="C:cytoplasmic stress granule"/>
    <property type="evidence" value="ECO:0007005"/>
    <property type="project" value="SGD"/>
</dbReference>
<dbReference type="GO" id="GO:0005829">
    <property type="term" value="C:cytosol"/>
    <property type="evidence" value="ECO:0000318"/>
    <property type="project" value="GO_Central"/>
</dbReference>
<dbReference type="GO" id="GO:0005524">
    <property type="term" value="F:ATP binding"/>
    <property type="evidence" value="ECO:0007669"/>
    <property type="project" value="UniProtKB-KW"/>
</dbReference>
<dbReference type="GO" id="GO:0046872">
    <property type="term" value="F:metal ion binding"/>
    <property type="evidence" value="ECO:0007669"/>
    <property type="project" value="UniProtKB-KW"/>
</dbReference>
<dbReference type="GO" id="GO:0004478">
    <property type="term" value="F:methionine adenosyltransferase activity"/>
    <property type="evidence" value="ECO:0000316"/>
    <property type="project" value="SGD"/>
</dbReference>
<dbReference type="GO" id="GO:0006555">
    <property type="term" value="P:methionine metabolic process"/>
    <property type="evidence" value="ECO:0000315"/>
    <property type="project" value="SGD"/>
</dbReference>
<dbReference type="GO" id="GO:0062030">
    <property type="term" value="P:negative regulation of stress granule assembly"/>
    <property type="evidence" value="ECO:0000315"/>
    <property type="project" value="SGD"/>
</dbReference>
<dbReference type="GO" id="GO:0006730">
    <property type="term" value="P:one-carbon metabolic process"/>
    <property type="evidence" value="ECO:0007669"/>
    <property type="project" value="UniProtKB-KW"/>
</dbReference>
<dbReference type="GO" id="GO:0006556">
    <property type="term" value="P:S-adenosylmethionine biosynthetic process"/>
    <property type="evidence" value="ECO:0000315"/>
    <property type="project" value="SGD"/>
</dbReference>
<dbReference type="CDD" id="cd18079">
    <property type="entry name" value="S-AdoMet_synt"/>
    <property type="match status" value="1"/>
</dbReference>
<dbReference type="FunFam" id="3.30.300.10:FF:000001">
    <property type="entry name" value="S-adenosylmethionine synthase"/>
    <property type="match status" value="1"/>
</dbReference>
<dbReference type="FunFam" id="3.30.300.10:FF:000003">
    <property type="entry name" value="S-adenosylmethionine synthase"/>
    <property type="match status" value="1"/>
</dbReference>
<dbReference type="FunFam" id="3.30.300.10:FF:000004">
    <property type="entry name" value="S-adenosylmethionine synthase"/>
    <property type="match status" value="1"/>
</dbReference>
<dbReference type="Gene3D" id="3.30.300.10">
    <property type="match status" value="3"/>
</dbReference>
<dbReference type="HAMAP" id="MF_00086">
    <property type="entry name" value="S_AdoMet_synth1"/>
    <property type="match status" value="1"/>
</dbReference>
<dbReference type="InterPro" id="IPR022631">
    <property type="entry name" value="ADOMET_SYNTHASE_CS"/>
</dbReference>
<dbReference type="InterPro" id="IPR022630">
    <property type="entry name" value="S-AdoMet_synt_C"/>
</dbReference>
<dbReference type="InterPro" id="IPR022629">
    <property type="entry name" value="S-AdoMet_synt_central"/>
</dbReference>
<dbReference type="InterPro" id="IPR022628">
    <property type="entry name" value="S-AdoMet_synt_N"/>
</dbReference>
<dbReference type="InterPro" id="IPR002133">
    <property type="entry name" value="S-AdoMet_synthetase"/>
</dbReference>
<dbReference type="InterPro" id="IPR022636">
    <property type="entry name" value="S-AdoMet_synthetase_sfam"/>
</dbReference>
<dbReference type="NCBIfam" id="TIGR01034">
    <property type="entry name" value="metK"/>
    <property type="match status" value="1"/>
</dbReference>
<dbReference type="PANTHER" id="PTHR11964">
    <property type="entry name" value="S-ADENOSYLMETHIONINE SYNTHETASE"/>
    <property type="match status" value="1"/>
</dbReference>
<dbReference type="Pfam" id="PF02773">
    <property type="entry name" value="S-AdoMet_synt_C"/>
    <property type="match status" value="1"/>
</dbReference>
<dbReference type="Pfam" id="PF02772">
    <property type="entry name" value="S-AdoMet_synt_M"/>
    <property type="match status" value="1"/>
</dbReference>
<dbReference type="Pfam" id="PF00438">
    <property type="entry name" value="S-AdoMet_synt_N"/>
    <property type="match status" value="1"/>
</dbReference>
<dbReference type="PIRSF" id="PIRSF000497">
    <property type="entry name" value="MAT"/>
    <property type="match status" value="1"/>
</dbReference>
<dbReference type="SUPFAM" id="SSF55973">
    <property type="entry name" value="S-adenosylmethionine synthetase"/>
    <property type="match status" value="3"/>
</dbReference>
<dbReference type="PROSITE" id="PS00376">
    <property type="entry name" value="ADOMET_SYNTHASE_1"/>
    <property type="match status" value="1"/>
</dbReference>
<dbReference type="PROSITE" id="PS00377">
    <property type="entry name" value="ADOMET_SYNTHASE_2"/>
    <property type="match status" value="1"/>
</dbReference>